<reference key="1">
    <citation type="journal article" date="2007" name="PLoS Genet.">
        <title>Patterns and implications of gene gain and loss in the evolution of Prochlorococcus.</title>
        <authorList>
            <person name="Kettler G.C."/>
            <person name="Martiny A.C."/>
            <person name="Huang K."/>
            <person name="Zucker J."/>
            <person name="Coleman M.L."/>
            <person name="Rodrigue S."/>
            <person name="Chen F."/>
            <person name="Lapidus A."/>
            <person name="Ferriera S."/>
            <person name="Johnson J."/>
            <person name="Steglich C."/>
            <person name="Church G.M."/>
            <person name="Richardson P."/>
            <person name="Chisholm S.W."/>
        </authorList>
    </citation>
    <scope>NUCLEOTIDE SEQUENCE [LARGE SCALE GENOMIC DNA]</scope>
    <source>
        <strain>MIT 9301</strain>
    </source>
</reference>
<accession>A3PF19</accession>
<organism>
    <name type="scientific">Prochlorococcus marinus (strain MIT 9301)</name>
    <dbReference type="NCBI Taxonomy" id="167546"/>
    <lineage>
        <taxon>Bacteria</taxon>
        <taxon>Bacillati</taxon>
        <taxon>Cyanobacteriota</taxon>
        <taxon>Cyanophyceae</taxon>
        <taxon>Synechococcales</taxon>
        <taxon>Prochlorococcaceae</taxon>
        <taxon>Prochlorococcus</taxon>
    </lineage>
</organism>
<feature type="chain" id="PRO_1000004930" description="Peptide chain release factor 1">
    <location>
        <begin position="1"/>
        <end position="364"/>
    </location>
</feature>
<feature type="modified residue" description="N5-methylglutamine" evidence="1">
    <location>
        <position position="239"/>
    </location>
</feature>
<gene>
    <name evidence="1" type="primary">prfA</name>
    <name type="ordered locus">P9301_17211</name>
</gene>
<evidence type="ECO:0000255" key="1">
    <source>
        <dbReference type="HAMAP-Rule" id="MF_00093"/>
    </source>
</evidence>
<keyword id="KW-0963">Cytoplasm</keyword>
<keyword id="KW-0488">Methylation</keyword>
<keyword id="KW-0648">Protein biosynthesis</keyword>
<keyword id="KW-1185">Reference proteome</keyword>
<sequence>MEYSTLIARLKTASESFENLEVQLADPDIANDPKKLESIARERSKLEPLVLDFNKLLDTDKEIEDSKNLLKENRNDKEMESLINEELITLEESKSELIQKTTIALLPKDPRDERSVMLEIRAGAGGNEACIWAGDLARMYERYGQKIGWSVKPVSASESDMGGFKELVISVKGDSVYSQLKFEAGVHRVQRVPATESQGRVHTSTATVAVMPEADPVEVKIDPTDLEVGTARSGGAGGQNVNKVETAIDLLHKPTGIRVFCTQERSQLQNRERAMEILRAKLYEIQLKEANAKERSQRLSQVGTGDRSEKIRTYNFKDNRTTDHRLGSNFSLEPILAGQLDEVINACIAQEQKRMMEDFNKGVN</sequence>
<proteinExistence type="inferred from homology"/>
<name>RF1_PROM0</name>
<protein>
    <recommendedName>
        <fullName evidence="1">Peptide chain release factor 1</fullName>
        <shortName evidence="1">RF-1</shortName>
    </recommendedName>
</protein>
<comment type="function">
    <text evidence="1">Peptide chain release factor 1 directs the termination of translation in response to the peptide chain termination codons UAG and UAA.</text>
</comment>
<comment type="subcellular location">
    <subcellularLocation>
        <location evidence="1">Cytoplasm</location>
    </subcellularLocation>
</comment>
<comment type="PTM">
    <text evidence="1">Methylated by PrmC. Methylation increases the termination efficiency of RF1.</text>
</comment>
<comment type="similarity">
    <text evidence="1">Belongs to the prokaryotic/mitochondrial release factor family.</text>
</comment>
<dbReference type="EMBL" id="CP000576">
    <property type="protein sequence ID" value="ABO18344.1"/>
    <property type="molecule type" value="Genomic_DNA"/>
</dbReference>
<dbReference type="RefSeq" id="WP_011863637.1">
    <property type="nucleotide sequence ID" value="NC_009091.1"/>
</dbReference>
<dbReference type="SMR" id="A3PF19"/>
<dbReference type="STRING" id="167546.P9301_17211"/>
<dbReference type="KEGG" id="pmg:P9301_17211"/>
<dbReference type="eggNOG" id="COG0216">
    <property type="taxonomic scope" value="Bacteria"/>
</dbReference>
<dbReference type="HOGENOM" id="CLU_036856_0_1_3"/>
<dbReference type="OrthoDB" id="9806673at2"/>
<dbReference type="Proteomes" id="UP000001430">
    <property type="component" value="Chromosome"/>
</dbReference>
<dbReference type="GO" id="GO:0005737">
    <property type="term" value="C:cytoplasm"/>
    <property type="evidence" value="ECO:0007669"/>
    <property type="project" value="UniProtKB-SubCell"/>
</dbReference>
<dbReference type="GO" id="GO:0016149">
    <property type="term" value="F:translation release factor activity, codon specific"/>
    <property type="evidence" value="ECO:0007669"/>
    <property type="project" value="UniProtKB-UniRule"/>
</dbReference>
<dbReference type="FunFam" id="3.30.160.20:FF:000004">
    <property type="entry name" value="Peptide chain release factor 1"/>
    <property type="match status" value="1"/>
</dbReference>
<dbReference type="FunFam" id="3.30.70.1660:FF:000002">
    <property type="entry name" value="Peptide chain release factor 1"/>
    <property type="match status" value="1"/>
</dbReference>
<dbReference type="Gene3D" id="3.30.160.20">
    <property type="match status" value="1"/>
</dbReference>
<dbReference type="Gene3D" id="3.30.70.1660">
    <property type="match status" value="2"/>
</dbReference>
<dbReference type="Gene3D" id="6.10.140.1950">
    <property type="match status" value="1"/>
</dbReference>
<dbReference type="HAMAP" id="MF_00093">
    <property type="entry name" value="Rel_fac_1"/>
    <property type="match status" value="1"/>
</dbReference>
<dbReference type="InterPro" id="IPR005139">
    <property type="entry name" value="PCRF"/>
</dbReference>
<dbReference type="InterPro" id="IPR000352">
    <property type="entry name" value="Pep_chain_release_fac_I"/>
</dbReference>
<dbReference type="InterPro" id="IPR045853">
    <property type="entry name" value="Pep_chain_release_fac_I_sf"/>
</dbReference>
<dbReference type="InterPro" id="IPR050057">
    <property type="entry name" value="Prokaryotic/Mito_RF"/>
</dbReference>
<dbReference type="InterPro" id="IPR004373">
    <property type="entry name" value="RF-1"/>
</dbReference>
<dbReference type="NCBIfam" id="TIGR00019">
    <property type="entry name" value="prfA"/>
    <property type="match status" value="1"/>
</dbReference>
<dbReference type="NCBIfam" id="NF001859">
    <property type="entry name" value="PRK00591.1"/>
    <property type="match status" value="1"/>
</dbReference>
<dbReference type="PANTHER" id="PTHR43804">
    <property type="entry name" value="LD18447P"/>
    <property type="match status" value="1"/>
</dbReference>
<dbReference type="PANTHER" id="PTHR43804:SF8">
    <property type="entry name" value="PEPTIDE CHAIN RELEASE FACTOR APG3, CHLOROPLASTIC"/>
    <property type="match status" value="1"/>
</dbReference>
<dbReference type="Pfam" id="PF03462">
    <property type="entry name" value="PCRF"/>
    <property type="match status" value="1"/>
</dbReference>
<dbReference type="Pfam" id="PF00472">
    <property type="entry name" value="RF-1"/>
    <property type="match status" value="1"/>
</dbReference>
<dbReference type="SMART" id="SM00937">
    <property type="entry name" value="PCRF"/>
    <property type="match status" value="1"/>
</dbReference>
<dbReference type="SUPFAM" id="SSF75620">
    <property type="entry name" value="Release factor"/>
    <property type="match status" value="1"/>
</dbReference>
<dbReference type="PROSITE" id="PS00745">
    <property type="entry name" value="RF_PROK_I"/>
    <property type="match status" value="1"/>
</dbReference>